<organism>
    <name type="scientific">Ruminiclostridium cellulolyticum (strain ATCC 35319 / DSM 5812 / JCM 6584 / H10)</name>
    <name type="common">Clostridium cellulolyticum</name>
    <dbReference type="NCBI Taxonomy" id="394503"/>
    <lineage>
        <taxon>Bacteria</taxon>
        <taxon>Bacillati</taxon>
        <taxon>Bacillota</taxon>
        <taxon>Clostridia</taxon>
        <taxon>Eubacteriales</taxon>
        <taxon>Oscillospiraceae</taxon>
        <taxon>Ruminiclostridium</taxon>
    </lineage>
</organism>
<feature type="chain" id="PRO_1000164450" description="Xanthine phosphoribosyltransferase">
    <location>
        <begin position="1"/>
        <end position="190"/>
    </location>
</feature>
<feature type="binding site" evidence="1">
    <location>
        <position position="20"/>
    </location>
    <ligand>
        <name>xanthine</name>
        <dbReference type="ChEBI" id="CHEBI:17712"/>
    </ligand>
</feature>
<feature type="binding site" evidence="1">
    <location>
        <position position="27"/>
    </location>
    <ligand>
        <name>xanthine</name>
        <dbReference type="ChEBI" id="CHEBI:17712"/>
    </ligand>
</feature>
<feature type="binding site" evidence="1">
    <location>
        <begin position="128"/>
        <end position="132"/>
    </location>
    <ligand>
        <name>5-phospho-alpha-D-ribose 1-diphosphate</name>
        <dbReference type="ChEBI" id="CHEBI:58017"/>
    </ligand>
</feature>
<feature type="binding site" evidence="1">
    <location>
        <position position="156"/>
    </location>
    <ligand>
        <name>xanthine</name>
        <dbReference type="ChEBI" id="CHEBI:17712"/>
    </ligand>
</feature>
<comment type="function">
    <text evidence="1">Converts the preformed base xanthine, a product of nucleic acid breakdown, to xanthosine 5'-monophosphate (XMP), so it can be reused for RNA or DNA synthesis.</text>
</comment>
<comment type="catalytic activity">
    <reaction evidence="1">
        <text>XMP + diphosphate = xanthine + 5-phospho-alpha-D-ribose 1-diphosphate</text>
        <dbReference type="Rhea" id="RHEA:10800"/>
        <dbReference type="ChEBI" id="CHEBI:17712"/>
        <dbReference type="ChEBI" id="CHEBI:33019"/>
        <dbReference type="ChEBI" id="CHEBI:57464"/>
        <dbReference type="ChEBI" id="CHEBI:58017"/>
        <dbReference type="EC" id="2.4.2.22"/>
    </reaction>
</comment>
<comment type="pathway">
    <text evidence="1">Purine metabolism; XMP biosynthesis via salvage pathway; XMP from xanthine: step 1/1.</text>
</comment>
<comment type="subunit">
    <text evidence="1">Homodimer.</text>
</comment>
<comment type="subcellular location">
    <subcellularLocation>
        <location evidence="1">Cytoplasm</location>
    </subcellularLocation>
</comment>
<comment type="similarity">
    <text evidence="1">Belongs to the purine/pyrimidine phosphoribosyltransferase family. Xpt subfamily.</text>
</comment>
<dbReference type="EC" id="2.4.2.22" evidence="1"/>
<dbReference type="EMBL" id="CP001348">
    <property type="protein sequence ID" value="ACL75759.1"/>
    <property type="molecule type" value="Genomic_DNA"/>
</dbReference>
<dbReference type="RefSeq" id="WP_015924904.1">
    <property type="nucleotide sequence ID" value="NC_011898.1"/>
</dbReference>
<dbReference type="SMR" id="B8I1G1"/>
<dbReference type="STRING" id="394503.Ccel_1405"/>
<dbReference type="KEGG" id="cce:Ccel_1405"/>
<dbReference type="eggNOG" id="COG0503">
    <property type="taxonomic scope" value="Bacteria"/>
</dbReference>
<dbReference type="HOGENOM" id="CLU_099015_0_0_9"/>
<dbReference type="OrthoDB" id="9790678at2"/>
<dbReference type="UniPathway" id="UPA00602">
    <property type="reaction ID" value="UER00658"/>
</dbReference>
<dbReference type="Proteomes" id="UP000001349">
    <property type="component" value="Chromosome"/>
</dbReference>
<dbReference type="GO" id="GO:0005737">
    <property type="term" value="C:cytoplasm"/>
    <property type="evidence" value="ECO:0007669"/>
    <property type="project" value="UniProtKB-SubCell"/>
</dbReference>
<dbReference type="GO" id="GO:0000310">
    <property type="term" value="F:xanthine phosphoribosyltransferase activity"/>
    <property type="evidence" value="ECO:0007669"/>
    <property type="project" value="UniProtKB-UniRule"/>
</dbReference>
<dbReference type="GO" id="GO:0006166">
    <property type="term" value="P:purine ribonucleoside salvage"/>
    <property type="evidence" value="ECO:0007669"/>
    <property type="project" value="UniProtKB-KW"/>
</dbReference>
<dbReference type="GO" id="GO:0046110">
    <property type="term" value="P:xanthine metabolic process"/>
    <property type="evidence" value="ECO:0007669"/>
    <property type="project" value="InterPro"/>
</dbReference>
<dbReference type="GO" id="GO:0032265">
    <property type="term" value="P:XMP salvage"/>
    <property type="evidence" value="ECO:0007669"/>
    <property type="project" value="UniProtKB-UniRule"/>
</dbReference>
<dbReference type="CDD" id="cd06223">
    <property type="entry name" value="PRTases_typeI"/>
    <property type="match status" value="1"/>
</dbReference>
<dbReference type="Gene3D" id="3.40.50.2020">
    <property type="match status" value="1"/>
</dbReference>
<dbReference type="HAMAP" id="MF_01184">
    <property type="entry name" value="XPRTase"/>
    <property type="match status" value="1"/>
</dbReference>
<dbReference type="InterPro" id="IPR000836">
    <property type="entry name" value="PRibTrfase_dom"/>
</dbReference>
<dbReference type="InterPro" id="IPR029057">
    <property type="entry name" value="PRTase-like"/>
</dbReference>
<dbReference type="InterPro" id="IPR050118">
    <property type="entry name" value="Pur/Pyrimidine_PRTase"/>
</dbReference>
<dbReference type="InterPro" id="IPR010079">
    <property type="entry name" value="Xanthine_PRibTrfase"/>
</dbReference>
<dbReference type="NCBIfam" id="NF006671">
    <property type="entry name" value="PRK09219.1"/>
    <property type="match status" value="1"/>
</dbReference>
<dbReference type="NCBIfam" id="TIGR01744">
    <property type="entry name" value="XPRTase"/>
    <property type="match status" value="1"/>
</dbReference>
<dbReference type="PANTHER" id="PTHR43864">
    <property type="entry name" value="HYPOXANTHINE/GUANINE PHOSPHORIBOSYLTRANSFERASE"/>
    <property type="match status" value="1"/>
</dbReference>
<dbReference type="PANTHER" id="PTHR43864:SF1">
    <property type="entry name" value="XANTHINE PHOSPHORIBOSYLTRANSFERASE"/>
    <property type="match status" value="1"/>
</dbReference>
<dbReference type="SUPFAM" id="SSF53271">
    <property type="entry name" value="PRTase-like"/>
    <property type="match status" value="1"/>
</dbReference>
<keyword id="KW-0963">Cytoplasm</keyword>
<keyword id="KW-0328">Glycosyltransferase</keyword>
<keyword id="KW-0660">Purine salvage</keyword>
<keyword id="KW-1185">Reference proteome</keyword>
<keyword id="KW-0808">Transferase</keyword>
<gene>
    <name evidence="1" type="primary">xpt</name>
    <name type="ordered locus">Ccel_1405</name>
</gene>
<accession>B8I1G1</accession>
<protein>
    <recommendedName>
        <fullName evidence="1">Xanthine phosphoribosyltransferase</fullName>
        <shortName evidence="1">XPRTase</shortName>
        <ecNumber evidence="1">2.4.2.22</ecNumber>
    </recommendedName>
</protein>
<name>XPT_RUMCH</name>
<sequence>MELLKQRILKDGRVIGNDILKVDSFLNHQMDVALFNEMGKEFHKQFAHKNITKILTIEASGIGIACIAAQYFNVPVIFAKKTESRNLDSDAYLSEVFSFTKGKTYTIRVSKNYLNSEDTILIIDDFLANGKAALGLAHIVEQSGAKLGGIGIAVEKGFQDGGKLLREKGFDVKSLAIISSMENGRLSFTE</sequence>
<proteinExistence type="inferred from homology"/>
<reference key="1">
    <citation type="submission" date="2009-01" db="EMBL/GenBank/DDBJ databases">
        <title>Complete sequence of Clostridium cellulolyticum H10.</title>
        <authorList>
            <consortium name="US DOE Joint Genome Institute"/>
            <person name="Lucas S."/>
            <person name="Copeland A."/>
            <person name="Lapidus A."/>
            <person name="Glavina del Rio T."/>
            <person name="Dalin E."/>
            <person name="Tice H."/>
            <person name="Bruce D."/>
            <person name="Goodwin L."/>
            <person name="Pitluck S."/>
            <person name="Chertkov O."/>
            <person name="Saunders E."/>
            <person name="Brettin T."/>
            <person name="Detter J.C."/>
            <person name="Han C."/>
            <person name="Larimer F."/>
            <person name="Land M."/>
            <person name="Hauser L."/>
            <person name="Kyrpides N."/>
            <person name="Ivanova N."/>
            <person name="Zhou J."/>
            <person name="Richardson P."/>
        </authorList>
    </citation>
    <scope>NUCLEOTIDE SEQUENCE [LARGE SCALE GENOMIC DNA]</scope>
    <source>
        <strain>ATCC 35319 / DSM 5812 / JCM 6584 / H10</strain>
    </source>
</reference>
<evidence type="ECO:0000255" key="1">
    <source>
        <dbReference type="HAMAP-Rule" id="MF_01184"/>
    </source>
</evidence>